<dbReference type="EMBL" id="X15664">
    <property type="protein sequence ID" value="CAA33701.1"/>
    <property type="molecule type" value="Genomic_DNA"/>
</dbReference>
<dbReference type="EMBL" id="L47971">
    <property type="protein sequence ID" value="AAB06809.1"/>
    <property type="molecule type" value="Genomic_DNA"/>
</dbReference>
<dbReference type="EMBL" id="AL009126">
    <property type="protein sequence ID" value="CAB11902.1"/>
    <property type="molecule type" value="Genomic_DNA"/>
</dbReference>
<dbReference type="PIR" id="S05992">
    <property type="entry name" value="R5BS4B"/>
</dbReference>
<dbReference type="RefSeq" id="WP_003225805.1">
    <property type="nucleotide sequence ID" value="NZ_OZ025638.1"/>
</dbReference>
<dbReference type="PDB" id="3J3V">
    <property type="method" value="EM"/>
    <property type="resolution" value="13.30 A"/>
    <property type="chains" value="K=1-122"/>
</dbReference>
<dbReference type="PDB" id="3J3W">
    <property type="method" value="EM"/>
    <property type="resolution" value="10.70 A"/>
    <property type="chains" value="K=1-122"/>
</dbReference>
<dbReference type="PDB" id="3J9W">
    <property type="method" value="EM"/>
    <property type="resolution" value="3.90 A"/>
    <property type="chains" value="BN=1-122"/>
</dbReference>
<dbReference type="PDB" id="5NJT">
    <property type="method" value="EM"/>
    <property type="resolution" value="3.80 A"/>
    <property type="chains" value="d=1-122"/>
</dbReference>
<dbReference type="PDB" id="6HA1">
    <property type="method" value="EM"/>
    <property type="resolution" value="3.10 A"/>
    <property type="chains" value="K=1-122"/>
</dbReference>
<dbReference type="PDB" id="6HA8">
    <property type="method" value="EM"/>
    <property type="resolution" value="3.50 A"/>
    <property type="chains" value="K=1-122"/>
</dbReference>
<dbReference type="PDB" id="6HTQ">
    <property type="method" value="EM"/>
    <property type="resolution" value="4.50 A"/>
    <property type="chains" value="K=1-122"/>
</dbReference>
<dbReference type="PDB" id="6PPF">
    <property type="method" value="EM"/>
    <property type="resolution" value="3.40 A"/>
    <property type="chains" value="K=1-122"/>
</dbReference>
<dbReference type="PDB" id="6PPK">
    <property type="method" value="EM"/>
    <property type="resolution" value="4.40 A"/>
    <property type="chains" value="K=1-122"/>
</dbReference>
<dbReference type="PDB" id="6PVK">
    <property type="method" value="EM"/>
    <property type="resolution" value="3.40 A"/>
    <property type="chains" value="K=1-122"/>
</dbReference>
<dbReference type="PDB" id="6TNN">
    <property type="method" value="EM"/>
    <property type="resolution" value="3.07 A"/>
    <property type="chains" value="d=1-122"/>
</dbReference>
<dbReference type="PDB" id="6TPQ">
    <property type="method" value="EM"/>
    <property type="resolution" value="3.07 A"/>
    <property type="chains" value="d=1-122"/>
</dbReference>
<dbReference type="PDB" id="7AQC">
    <property type="method" value="EM"/>
    <property type="resolution" value="2.99 A"/>
    <property type="chains" value="K=1-122"/>
</dbReference>
<dbReference type="PDB" id="7AQD">
    <property type="method" value="EM"/>
    <property type="resolution" value="3.10 A"/>
    <property type="chains" value="K=1-122"/>
</dbReference>
<dbReference type="PDB" id="7AS8">
    <property type="method" value="EM"/>
    <property type="resolution" value="2.90 A"/>
    <property type="chains" value="O=1-122"/>
</dbReference>
<dbReference type="PDB" id="7AS9">
    <property type="method" value="EM"/>
    <property type="resolution" value="3.50 A"/>
    <property type="chains" value="O=1-122"/>
</dbReference>
<dbReference type="PDB" id="7O5B">
    <property type="method" value="EM"/>
    <property type="resolution" value="3.33 A"/>
    <property type="chains" value="f=1-122"/>
</dbReference>
<dbReference type="PDB" id="7OPE">
    <property type="method" value="EM"/>
    <property type="resolution" value="3.20 A"/>
    <property type="chains" value="O=1-122"/>
</dbReference>
<dbReference type="PDB" id="7QGU">
    <property type="method" value="EM"/>
    <property type="resolution" value="4.75 A"/>
    <property type="chains" value="K=1-122"/>
</dbReference>
<dbReference type="PDB" id="7QH4">
    <property type="method" value="EM"/>
    <property type="resolution" value="5.45 A"/>
    <property type="chains" value="K=1-122"/>
</dbReference>
<dbReference type="PDB" id="7QV1">
    <property type="method" value="EM"/>
    <property type="resolution" value="3.50 A"/>
    <property type="chains" value="K=1-122"/>
</dbReference>
<dbReference type="PDB" id="7QV2">
    <property type="method" value="EM"/>
    <property type="resolution" value="3.50 A"/>
    <property type="chains" value="K=1-122"/>
</dbReference>
<dbReference type="PDB" id="7QV3">
    <property type="method" value="EM"/>
    <property type="resolution" value="5.14 A"/>
    <property type="chains" value="K=1-122"/>
</dbReference>
<dbReference type="PDB" id="7S9U">
    <property type="method" value="EM"/>
    <property type="resolution" value="3.20 A"/>
    <property type="chains" value="K=1-122"/>
</dbReference>
<dbReference type="PDB" id="7SAE">
    <property type="method" value="EM"/>
    <property type="resolution" value="3.00 A"/>
    <property type="chains" value="K=1-122"/>
</dbReference>
<dbReference type="PDB" id="8BUU">
    <property type="method" value="EM"/>
    <property type="resolution" value="2.90 A"/>
    <property type="chains" value="K=1-122"/>
</dbReference>
<dbReference type="PDB" id="8QCQ">
    <property type="method" value="EM"/>
    <property type="resolution" value="2.30 A"/>
    <property type="chains" value="K=1-122"/>
</dbReference>
<dbReference type="PDB" id="8QPP">
    <property type="method" value="EM"/>
    <property type="resolution" value="3.40 A"/>
    <property type="chains" value="f=1-122"/>
</dbReference>
<dbReference type="PDB" id="8R55">
    <property type="method" value="EM"/>
    <property type="resolution" value="3.57 A"/>
    <property type="chains" value="f=1-122"/>
</dbReference>
<dbReference type="PDB" id="8S1P">
    <property type="method" value="EM"/>
    <property type="resolution" value="1.96 A"/>
    <property type="chains" value="K=1-122"/>
</dbReference>
<dbReference type="PDB" id="8S1U">
    <property type="method" value="EM"/>
    <property type="resolution" value="3.40 A"/>
    <property type="chains" value="K=1-122"/>
</dbReference>
<dbReference type="PDB" id="9BS0">
    <property type="method" value="EM"/>
    <property type="resolution" value="3.30 A"/>
    <property type="chains" value="H=1-122"/>
</dbReference>
<dbReference type="PDB" id="9BSL">
    <property type="method" value="EM"/>
    <property type="resolution" value="3.10 A"/>
    <property type="chains" value="H=1-122"/>
</dbReference>
<dbReference type="PDB" id="9BSS">
    <property type="method" value="EM"/>
    <property type="resolution" value="3.10 A"/>
    <property type="chains" value="H=1-122"/>
</dbReference>
<dbReference type="PDBsum" id="3J3V"/>
<dbReference type="PDBsum" id="3J3W"/>
<dbReference type="PDBsum" id="3J9W"/>
<dbReference type="PDBsum" id="5NJT"/>
<dbReference type="PDBsum" id="6HA1"/>
<dbReference type="PDBsum" id="6HA8"/>
<dbReference type="PDBsum" id="6HTQ"/>
<dbReference type="PDBsum" id="6PPF"/>
<dbReference type="PDBsum" id="6PPK"/>
<dbReference type="PDBsum" id="6PVK"/>
<dbReference type="PDBsum" id="6TNN"/>
<dbReference type="PDBsum" id="6TPQ"/>
<dbReference type="PDBsum" id="7AQC"/>
<dbReference type="PDBsum" id="7AQD"/>
<dbReference type="PDBsum" id="7AS8"/>
<dbReference type="PDBsum" id="7AS9"/>
<dbReference type="PDBsum" id="7O5B"/>
<dbReference type="PDBsum" id="7OPE"/>
<dbReference type="PDBsum" id="7QGU"/>
<dbReference type="PDBsum" id="7QH4"/>
<dbReference type="PDBsum" id="7QV1"/>
<dbReference type="PDBsum" id="7QV2"/>
<dbReference type="PDBsum" id="7QV3"/>
<dbReference type="PDBsum" id="7S9U"/>
<dbReference type="PDBsum" id="7SAE"/>
<dbReference type="PDBsum" id="8BUU"/>
<dbReference type="PDBsum" id="8QCQ"/>
<dbReference type="PDBsum" id="8QPP"/>
<dbReference type="PDBsum" id="8R55"/>
<dbReference type="PDBsum" id="8S1P"/>
<dbReference type="PDBsum" id="8S1U"/>
<dbReference type="PDBsum" id="9BS0"/>
<dbReference type="PDBsum" id="9BSL"/>
<dbReference type="PDBsum" id="9BSS"/>
<dbReference type="EMDB" id="EMD-0176"/>
<dbReference type="EMDB" id="EMD-0177"/>
<dbReference type="EMDB" id="EMD-0270"/>
<dbReference type="EMDB" id="EMD-10535"/>
<dbReference type="EMDB" id="EMD-10543"/>
<dbReference type="EMDB" id="EMD-11862"/>
<dbReference type="EMDB" id="EMD-11864"/>
<dbReference type="EMDB" id="EMD-11889"/>
<dbReference type="EMDB" id="EMD-11890"/>
<dbReference type="EMDB" id="EMD-12734"/>
<dbReference type="EMDB" id="EMD-13017"/>
<dbReference type="EMDB" id="EMD-14157"/>
<dbReference type="EMDB" id="EMD-14158"/>
<dbReference type="EMDB" id="EMD-14159"/>
<dbReference type="EMDB" id="EMD-16246"/>
<dbReference type="EMDB" id="EMD-18332"/>
<dbReference type="EMDB" id="EMD-19638"/>
<dbReference type="EMDB" id="EMD-19641"/>
<dbReference type="EMDB" id="EMD-3656"/>
<dbReference type="EMDB" id="EMD-44849"/>
<dbReference type="EMDB" id="EMD-44869"/>
<dbReference type="EMDB" id="EMD-44871"/>
<dbReference type="SMR" id="P12875"/>
<dbReference type="FunCoup" id="P12875">
    <property type="interactions" value="657"/>
</dbReference>
<dbReference type="IntAct" id="P12875">
    <property type="interactions" value="1"/>
</dbReference>
<dbReference type="STRING" id="224308.BSU01260"/>
<dbReference type="jPOST" id="P12875"/>
<dbReference type="PaxDb" id="224308-BSU01260"/>
<dbReference type="EnsemblBacteria" id="CAB11902">
    <property type="protein sequence ID" value="CAB11902"/>
    <property type="gene ID" value="BSU_01260"/>
</dbReference>
<dbReference type="GeneID" id="86875476"/>
<dbReference type="GeneID" id="935939"/>
<dbReference type="KEGG" id="bsu:BSU01260"/>
<dbReference type="PATRIC" id="fig|224308.179.peg.129"/>
<dbReference type="eggNOG" id="COG0093">
    <property type="taxonomic scope" value="Bacteria"/>
</dbReference>
<dbReference type="InParanoid" id="P12875"/>
<dbReference type="OrthoDB" id="9806379at2"/>
<dbReference type="PhylomeDB" id="P12875"/>
<dbReference type="BioCyc" id="BSUB:BSU01260-MONOMER"/>
<dbReference type="EvolutionaryTrace" id="P12875"/>
<dbReference type="PRO" id="PR:P12875"/>
<dbReference type="Proteomes" id="UP000001570">
    <property type="component" value="Chromosome"/>
</dbReference>
<dbReference type="GO" id="GO:0022625">
    <property type="term" value="C:cytosolic large ribosomal subunit"/>
    <property type="evidence" value="ECO:0000318"/>
    <property type="project" value="GO_Central"/>
</dbReference>
<dbReference type="GO" id="GO:0070180">
    <property type="term" value="F:large ribosomal subunit rRNA binding"/>
    <property type="evidence" value="ECO:0000318"/>
    <property type="project" value="GO_Central"/>
</dbReference>
<dbReference type="GO" id="GO:0003735">
    <property type="term" value="F:structural constituent of ribosome"/>
    <property type="evidence" value="ECO:0000318"/>
    <property type="project" value="GO_Central"/>
</dbReference>
<dbReference type="GO" id="GO:0006412">
    <property type="term" value="P:translation"/>
    <property type="evidence" value="ECO:0007669"/>
    <property type="project" value="UniProtKB-UniRule"/>
</dbReference>
<dbReference type="CDD" id="cd00337">
    <property type="entry name" value="Ribosomal_uL14"/>
    <property type="match status" value="1"/>
</dbReference>
<dbReference type="FunFam" id="2.40.150.20:FF:000001">
    <property type="entry name" value="50S ribosomal protein L14"/>
    <property type="match status" value="1"/>
</dbReference>
<dbReference type="Gene3D" id="2.40.150.20">
    <property type="entry name" value="Ribosomal protein L14"/>
    <property type="match status" value="1"/>
</dbReference>
<dbReference type="HAMAP" id="MF_01367">
    <property type="entry name" value="Ribosomal_uL14"/>
    <property type="match status" value="1"/>
</dbReference>
<dbReference type="InterPro" id="IPR000218">
    <property type="entry name" value="Ribosomal_uL14"/>
</dbReference>
<dbReference type="InterPro" id="IPR005745">
    <property type="entry name" value="Ribosomal_uL14_bac-type"/>
</dbReference>
<dbReference type="InterPro" id="IPR019972">
    <property type="entry name" value="Ribosomal_uL14_CS"/>
</dbReference>
<dbReference type="InterPro" id="IPR036853">
    <property type="entry name" value="Ribosomal_uL14_sf"/>
</dbReference>
<dbReference type="NCBIfam" id="TIGR01067">
    <property type="entry name" value="rplN_bact"/>
    <property type="match status" value="1"/>
</dbReference>
<dbReference type="PANTHER" id="PTHR11761">
    <property type="entry name" value="50S/60S RIBOSOMAL PROTEIN L14/L23"/>
    <property type="match status" value="1"/>
</dbReference>
<dbReference type="PANTHER" id="PTHR11761:SF3">
    <property type="entry name" value="LARGE RIBOSOMAL SUBUNIT PROTEIN UL14M"/>
    <property type="match status" value="1"/>
</dbReference>
<dbReference type="Pfam" id="PF00238">
    <property type="entry name" value="Ribosomal_L14"/>
    <property type="match status" value="1"/>
</dbReference>
<dbReference type="SMART" id="SM01374">
    <property type="entry name" value="Ribosomal_L14"/>
    <property type="match status" value="1"/>
</dbReference>
<dbReference type="SUPFAM" id="SSF50193">
    <property type="entry name" value="Ribosomal protein L14"/>
    <property type="match status" value="1"/>
</dbReference>
<dbReference type="PROSITE" id="PS00049">
    <property type="entry name" value="RIBOSOMAL_L14"/>
    <property type="match status" value="1"/>
</dbReference>
<accession>P12875</accession>
<organism>
    <name type="scientific">Bacillus subtilis (strain 168)</name>
    <dbReference type="NCBI Taxonomy" id="224308"/>
    <lineage>
        <taxon>Bacteria</taxon>
        <taxon>Bacillati</taxon>
        <taxon>Bacillota</taxon>
        <taxon>Bacilli</taxon>
        <taxon>Bacillales</taxon>
        <taxon>Bacillaceae</taxon>
        <taxon>Bacillus</taxon>
    </lineage>
</organism>
<protein>
    <recommendedName>
        <fullName evidence="1">Large ribosomal subunit protein uL14</fullName>
    </recommendedName>
    <alternativeName>
        <fullName evidence="3">50S ribosomal protein L14</fullName>
    </alternativeName>
</protein>
<gene>
    <name evidence="1" type="primary">rplN</name>
    <name type="ordered locus">BSU01260</name>
</gene>
<sequence length="122" mass="13154">MIQQETRLKVADNSGAREVLTIKVLGGSGRKTANIGDVIVCTVKQATPGGVVKKGEVVKAVIVRTKSGARRSDGSYISFDENACVIIRDDKSPRGTRIFGPVARELRENNFMKIVSLAPEVI</sequence>
<keyword id="KW-0002">3D-structure</keyword>
<keyword id="KW-1185">Reference proteome</keyword>
<keyword id="KW-0687">Ribonucleoprotein</keyword>
<keyword id="KW-0689">Ribosomal protein</keyword>
<keyword id="KW-0694">RNA-binding</keyword>
<keyword id="KW-0699">rRNA-binding</keyword>
<comment type="function">
    <text evidence="1">Binds to 23S rRNA. Forms part of two intersubunit bridges in the 70S ribosome.</text>
</comment>
<comment type="subunit">
    <text evidence="1 2">Part of the 50S ribosomal subunit (PubMed:30126986). Forms a cluster with proteins L3 and L19. In the 70S ribosome, L14 and L19 interact and together make contacts with the 16S rRNA in bridges B5 and B8 (By similarity).</text>
</comment>
<comment type="similarity">
    <text evidence="1">Belongs to the universal ribosomal protein uL14 family.</text>
</comment>
<reference key="1">
    <citation type="journal article" date="1989" name="Nucleic Acids Res.">
        <title>Cloning and analysis of the spc ribosomal protein operon of Bacillus subtilis: comparison with the spc operon of Escherichia coli.</title>
        <authorList>
            <person name="Henkin T.M."/>
            <person name="Moon S.H."/>
            <person name="Mattheakis L.C."/>
            <person name="Nomura M."/>
        </authorList>
    </citation>
    <scope>NUCLEOTIDE SEQUENCE [GENOMIC DNA]</scope>
    <source>
        <strain>168</strain>
    </source>
</reference>
<reference key="2">
    <citation type="journal article" date="1996" name="Gene">
        <title>Genetic and transcriptional organization of the Bacillus subtilis spc-alpha region.</title>
        <authorList>
            <person name="Suh J.-W."/>
            <person name="Boylan S.A."/>
            <person name="Oh S.H."/>
            <person name="Price C.W."/>
        </authorList>
    </citation>
    <scope>NUCLEOTIDE SEQUENCE [GENOMIC DNA]</scope>
    <source>
        <strain>168 / Marburg / ATCC 6051 / DSM 10 / JCM 1465 / NBRC 13719 / NCIMB 3610 / NRRL NRS-744 / VKM B-501</strain>
    </source>
</reference>
<reference key="3">
    <citation type="journal article" date="1997" name="Nature">
        <title>The complete genome sequence of the Gram-positive bacterium Bacillus subtilis.</title>
        <authorList>
            <person name="Kunst F."/>
            <person name="Ogasawara N."/>
            <person name="Moszer I."/>
            <person name="Albertini A.M."/>
            <person name="Alloni G."/>
            <person name="Azevedo V."/>
            <person name="Bertero M.G."/>
            <person name="Bessieres P."/>
            <person name="Bolotin A."/>
            <person name="Borchert S."/>
            <person name="Borriss R."/>
            <person name="Boursier L."/>
            <person name="Brans A."/>
            <person name="Braun M."/>
            <person name="Brignell S.C."/>
            <person name="Bron S."/>
            <person name="Brouillet S."/>
            <person name="Bruschi C.V."/>
            <person name="Caldwell B."/>
            <person name="Capuano V."/>
            <person name="Carter N.M."/>
            <person name="Choi S.-K."/>
            <person name="Codani J.-J."/>
            <person name="Connerton I.F."/>
            <person name="Cummings N.J."/>
            <person name="Daniel R.A."/>
            <person name="Denizot F."/>
            <person name="Devine K.M."/>
            <person name="Duesterhoeft A."/>
            <person name="Ehrlich S.D."/>
            <person name="Emmerson P.T."/>
            <person name="Entian K.-D."/>
            <person name="Errington J."/>
            <person name="Fabret C."/>
            <person name="Ferrari E."/>
            <person name="Foulger D."/>
            <person name="Fritz C."/>
            <person name="Fujita M."/>
            <person name="Fujita Y."/>
            <person name="Fuma S."/>
            <person name="Galizzi A."/>
            <person name="Galleron N."/>
            <person name="Ghim S.-Y."/>
            <person name="Glaser P."/>
            <person name="Goffeau A."/>
            <person name="Golightly E.J."/>
            <person name="Grandi G."/>
            <person name="Guiseppi G."/>
            <person name="Guy B.J."/>
            <person name="Haga K."/>
            <person name="Haiech J."/>
            <person name="Harwood C.R."/>
            <person name="Henaut A."/>
            <person name="Hilbert H."/>
            <person name="Holsappel S."/>
            <person name="Hosono S."/>
            <person name="Hullo M.-F."/>
            <person name="Itaya M."/>
            <person name="Jones L.-M."/>
            <person name="Joris B."/>
            <person name="Karamata D."/>
            <person name="Kasahara Y."/>
            <person name="Klaerr-Blanchard M."/>
            <person name="Klein C."/>
            <person name="Kobayashi Y."/>
            <person name="Koetter P."/>
            <person name="Koningstein G."/>
            <person name="Krogh S."/>
            <person name="Kumano M."/>
            <person name="Kurita K."/>
            <person name="Lapidus A."/>
            <person name="Lardinois S."/>
            <person name="Lauber J."/>
            <person name="Lazarevic V."/>
            <person name="Lee S.-M."/>
            <person name="Levine A."/>
            <person name="Liu H."/>
            <person name="Masuda S."/>
            <person name="Mauel C."/>
            <person name="Medigue C."/>
            <person name="Medina N."/>
            <person name="Mellado R.P."/>
            <person name="Mizuno M."/>
            <person name="Moestl D."/>
            <person name="Nakai S."/>
            <person name="Noback M."/>
            <person name="Noone D."/>
            <person name="O'Reilly M."/>
            <person name="Ogawa K."/>
            <person name="Ogiwara A."/>
            <person name="Oudega B."/>
            <person name="Park S.-H."/>
            <person name="Parro V."/>
            <person name="Pohl T.M."/>
            <person name="Portetelle D."/>
            <person name="Porwollik S."/>
            <person name="Prescott A.M."/>
            <person name="Presecan E."/>
            <person name="Pujic P."/>
            <person name="Purnelle B."/>
            <person name="Rapoport G."/>
            <person name="Rey M."/>
            <person name="Reynolds S."/>
            <person name="Rieger M."/>
            <person name="Rivolta C."/>
            <person name="Rocha E."/>
            <person name="Roche B."/>
            <person name="Rose M."/>
            <person name="Sadaie Y."/>
            <person name="Sato T."/>
            <person name="Scanlan E."/>
            <person name="Schleich S."/>
            <person name="Schroeter R."/>
            <person name="Scoffone F."/>
            <person name="Sekiguchi J."/>
            <person name="Sekowska A."/>
            <person name="Seror S.J."/>
            <person name="Serror P."/>
            <person name="Shin B.-S."/>
            <person name="Soldo B."/>
            <person name="Sorokin A."/>
            <person name="Tacconi E."/>
            <person name="Takagi T."/>
            <person name="Takahashi H."/>
            <person name="Takemaru K."/>
            <person name="Takeuchi M."/>
            <person name="Tamakoshi A."/>
            <person name="Tanaka T."/>
            <person name="Terpstra P."/>
            <person name="Tognoni A."/>
            <person name="Tosato V."/>
            <person name="Uchiyama S."/>
            <person name="Vandenbol M."/>
            <person name="Vannier F."/>
            <person name="Vassarotti A."/>
            <person name="Viari A."/>
            <person name="Wambutt R."/>
            <person name="Wedler E."/>
            <person name="Wedler H."/>
            <person name="Weitzenegger T."/>
            <person name="Winters P."/>
            <person name="Wipat A."/>
            <person name="Yamamoto H."/>
            <person name="Yamane K."/>
            <person name="Yasumoto K."/>
            <person name="Yata K."/>
            <person name="Yoshida K."/>
            <person name="Yoshikawa H.-F."/>
            <person name="Zumstein E."/>
            <person name="Yoshikawa H."/>
            <person name="Danchin A."/>
        </authorList>
    </citation>
    <scope>NUCLEOTIDE SEQUENCE [LARGE SCALE GENOMIC DNA]</scope>
    <source>
        <strain>168</strain>
    </source>
</reference>
<reference evidence="4 5" key="4">
    <citation type="journal article" date="2018" name="Proc. Natl. Acad. Sci. U.S.A.">
        <title>Structural basis for antibiotic resistance mediated by the Bacillus subtilis ABCF ATPase VmlR.</title>
        <authorList>
            <person name="Crowe-McAuliffe C."/>
            <person name="Graf M."/>
            <person name="Huter P."/>
            <person name="Takada H."/>
            <person name="Abdelshahid M."/>
            <person name="Novacek J."/>
            <person name="Murina V."/>
            <person name="Atkinson G.C."/>
            <person name="Hauryliuk V."/>
            <person name="Wilson D.N."/>
        </authorList>
    </citation>
    <scope>STRUCTURE BY ELECTRON MICROSCOPY (3.10 ANGSTROMS) OF 1-122 WITH AND WITHOUT VIRGINIAMYCIN M</scope>
</reference>
<proteinExistence type="evidence at protein level"/>
<name>RL14_BACSU</name>
<evidence type="ECO:0000255" key="1">
    <source>
        <dbReference type="HAMAP-Rule" id="MF_01367"/>
    </source>
</evidence>
<evidence type="ECO:0000269" key="2">
    <source>
    </source>
</evidence>
<evidence type="ECO:0000305" key="3"/>
<evidence type="ECO:0007744" key="4">
    <source>
        <dbReference type="PDB" id="6HA1"/>
    </source>
</evidence>
<evidence type="ECO:0007744" key="5">
    <source>
        <dbReference type="PDB" id="6HA8"/>
    </source>
</evidence>
<evidence type="ECO:0007829" key="6">
    <source>
        <dbReference type="PDB" id="7AQC"/>
    </source>
</evidence>
<evidence type="ECO:0007829" key="7">
    <source>
        <dbReference type="PDB" id="7SAE"/>
    </source>
</evidence>
<evidence type="ECO:0007829" key="8">
    <source>
        <dbReference type="PDB" id="8S1P"/>
    </source>
</evidence>
<evidence type="ECO:0007829" key="9">
    <source>
        <dbReference type="PDB" id="9BS0"/>
    </source>
</evidence>
<feature type="chain" id="PRO_0000128530" description="Large ribosomal subunit protein uL14">
    <location>
        <begin position="1"/>
        <end position="122"/>
    </location>
</feature>
<feature type="strand" evidence="8">
    <location>
        <begin position="7"/>
        <end position="10"/>
    </location>
</feature>
<feature type="strand" evidence="8">
    <location>
        <begin position="12"/>
        <end position="24"/>
    </location>
</feature>
<feature type="turn" evidence="6">
    <location>
        <begin position="27"/>
        <end position="29"/>
    </location>
</feature>
<feature type="strand" evidence="8">
    <location>
        <begin position="38"/>
        <end position="46"/>
    </location>
</feature>
<feature type="strand" evidence="8">
    <location>
        <begin position="50"/>
        <end position="52"/>
    </location>
</feature>
<feature type="strand" evidence="8">
    <location>
        <begin position="57"/>
        <end position="64"/>
    </location>
</feature>
<feature type="strand" evidence="9">
    <location>
        <begin position="66"/>
        <end position="68"/>
    </location>
</feature>
<feature type="strand" evidence="9">
    <location>
        <begin position="72"/>
        <end position="74"/>
    </location>
</feature>
<feature type="strand" evidence="8">
    <location>
        <begin position="76"/>
        <end position="81"/>
    </location>
</feature>
<feature type="strand" evidence="8">
    <location>
        <begin position="83"/>
        <end position="87"/>
    </location>
</feature>
<feature type="strand" evidence="7">
    <location>
        <begin position="89"/>
        <end position="91"/>
    </location>
</feature>
<feature type="strand" evidence="8">
    <location>
        <begin position="93"/>
        <end position="96"/>
    </location>
</feature>
<feature type="strand" evidence="9">
    <location>
        <begin position="100"/>
        <end position="103"/>
    </location>
</feature>
<feature type="helix" evidence="8">
    <location>
        <begin position="105"/>
        <end position="108"/>
    </location>
</feature>
<feature type="helix" evidence="8">
    <location>
        <begin position="112"/>
        <end position="117"/>
    </location>
</feature>
<feature type="strand" evidence="9">
    <location>
        <begin position="118"/>
        <end position="122"/>
    </location>
</feature>